<dbReference type="EMBL" id="AY653733">
    <property type="protein sequence ID" value="AAV50559.1"/>
    <property type="molecule type" value="Genomic_DNA"/>
</dbReference>
<dbReference type="SMR" id="Q5UPW0"/>
<dbReference type="KEGG" id="vg:9924902"/>
<dbReference type="OrthoDB" id="12448at10239"/>
<dbReference type="Proteomes" id="UP000001134">
    <property type="component" value="Genome"/>
</dbReference>
<dbReference type="GO" id="GO:0016020">
    <property type="term" value="C:membrane"/>
    <property type="evidence" value="ECO:0007669"/>
    <property type="project" value="UniProtKB-SubCell"/>
</dbReference>
<gene>
    <name type="ordered locus">MIMI_R287</name>
</gene>
<evidence type="ECO:0000255" key="1"/>
<evidence type="ECO:0000305" key="2"/>
<reference key="1">
    <citation type="journal article" date="2004" name="Science">
        <title>The 1.2-megabase genome sequence of Mimivirus.</title>
        <authorList>
            <person name="Raoult D."/>
            <person name="Audic S."/>
            <person name="Robert C."/>
            <person name="Abergel C."/>
            <person name="Renesto P."/>
            <person name="Ogata H."/>
            <person name="La Scola B."/>
            <person name="Susan M."/>
            <person name="Claverie J.-M."/>
        </authorList>
    </citation>
    <scope>NUCLEOTIDE SEQUENCE [LARGE SCALE GENOMIC DNA]</scope>
    <source>
        <strain>Rowbotham-Bradford</strain>
    </source>
</reference>
<name>YR287_MIMIV</name>
<feature type="chain" id="PRO_0000253415" description="Uncharacterized protein R287">
    <location>
        <begin position="1"/>
        <end position="242"/>
    </location>
</feature>
<feature type="transmembrane region" description="Helical" evidence="1">
    <location>
        <begin position="4"/>
        <end position="24"/>
    </location>
</feature>
<feature type="transmembrane region" description="Helical" evidence="1">
    <location>
        <begin position="34"/>
        <end position="54"/>
    </location>
</feature>
<feature type="transmembrane region" description="Helical" evidence="1">
    <location>
        <begin position="74"/>
        <end position="94"/>
    </location>
</feature>
<feature type="transmembrane region" description="Helical" evidence="1">
    <location>
        <begin position="106"/>
        <end position="126"/>
    </location>
</feature>
<feature type="transmembrane region" description="Helical" evidence="1">
    <location>
        <begin position="162"/>
        <end position="182"/>
    </location>
</feature>
<feature type="transmembrane region" description="Helical" evidence="1">
    <location>
        <begin position="189"/>
        <end position="209"/>
    </location>
</feature>
<feature type="transmembrane region" description="Helical" evidence="1">
    <location>
        <begin position="217"/>
        <end position="237"/>
    </location>
</feature>
<feature type="glycosylation site" description="N-linked (GlcNAc...) asparagine; by host" evidence="1">
    <location>
        <position position="73"/>
    </location>
</feature>
<feature type="glycosylation site" description="N-linked (GlcNAc...) asparagine; by host" evidence="1">
    <location>
        <position position="185"/>
    </location>
</feature>
<proteinExistence type="predicted"/>
<keyword id="KW-0325">Glycoprotein</keyword>
<keyword id="KW-0472">Membrane</keyword>
<keyword id="KW-1185">Reference proteome</keyword>
<keyword id="KW-0812">Transmembrane</keyword>
<keyword id="KW-1133">Transmembrane helix</keyword>
<sequence length="242" mass="27952">MCWNYQVSLIFSVIYVVTNSYYVVKRPLYWKQYLLFGSFYLTMEVFQTLQWLFGNVYSDSMYGQSVCNSINVNYTIVAFILIWLQPILFSVIGYQTTTTNKWFFRVLTVLNCFVFFYGLKLLYGGFEKPDYYTISDSMFGSSTCTNEGETGHLVWRFKPKTLDVFPNHLTYIILCIISFVMYENNATRVIGLGWLLSLIVTKLLLAPTLVEIASSWCLLSIIANLLIVAYVHISTGIYLTGQ</sequence>
<protein>
    <recommendedName>
        <fullName>Uncharacterized protein R287</fullName>
    </recommendedName>
</protein>
<organism>
    <name type="scientific">Acanthamoeba polyphaga mimivirus</name>
    <name type="common">APMV</name>
    <dbReference type="NCBI Taxonomy" id="212035"/>
    <lineage>
        <taxon>Viruses</taxon>
        <taxon>Varidnaviria</taxon>
        <taxon>Bamfordvirae</taxon>
        <taxon>Nucleocytoviricota</taxon>
        <taxon>Megaviricetes</taxon>
        <taxon>Imitervirales</taxon>
        <taxon>Mimiviridae</taxon>
        <taxon>Megamimivirinae</taxon>
        <taxon>Mimivirus</taxon>
        <taxon>Mimivirus bradfordmassiliense</taxon>
    </lineage>
</organism>
<comment type="subcellular location">
    <subcellularLocation>
        <location evidence="2">Membrane</location>
        <topology evidence="2">Multi-pass membrane protein</topology>
    </subcellularLocation>
</comment>
<accession>Q5UPW0</accession>
<organismHost>
    <name type="scientific">Acanthamoeba polyphaga</name>
    <name type="common">Amoeba</name>
    <dbReference type="NCBI Taxonomy" id="5757"/>
</organismHost>